<evidence type="ECO:0000255" key="1">
    <source>
        <dbReference type="HAMAP-Rule" id="MF_00929"/>
    </source>
</evidence>
<evidence type="ECO:0000269" key="2">
    <source>
    </source>
</evidence>
<evidence type="ECO:0000269" key="3">
    <source>
    </source>
</evidence>
<accession>Q5LH66</accession>
<accession>B9X0V9</accession>
<comment type="function">
    <text evidence="1 2 3">Catalyzes the reversible epimerization of cellobiose to 4-O-beta-D-glucopyranosyl-D-mannose (Glc-Man). Can also epimerize cellotriose to Glc-Glc-Man, cellotetraose to Glc-Glc-Glc-Man, lactose to epilactose, and mannobiose to 4-O-beta-D-mannopyranosyl-D-glucopyranose (Man-Glc). May function as a mannobiose 2-epimerase in vivo and be involved in a mannan catabolic pathway which feeds into glycolysis.</text>
</comment>
<comment type="catalytic activity">
    <reaction evidence="1 2 3">
        <text>D-cellobiose = beta-D-glucosyl-(1-&gt;4)-D-mannopyranose</text>
        <dbReference type="Rhea" id="RHEA:23384"/>
        <dbReference type="ChEBI" id="CHEBI:17057"/>
        <dbReference type="ChEBI" id="CHEBI:47931"/>
        <dbReference type="EC" id="5.1.3.11"/>
    </reaction>
</comment>
<comment type="biophysicochemical properties">
    <kinetics>
        <KM evidence="2 3">3.75 mM for cellobiose</KM>
        <KM evidence="2 3">6.56 mM for lactose</KM>
        <KM evidence="2 3">5.51 mM for mannobiose</KM>
        <text>kcat is 67.6 sec(-1) for cellobiose. kcat is 79.5 sec(-1) for lactose. kcat is 104 sec(-1) for mannobiose.</text>
    </kinetics>
    <phDependence>
        <text evidence="2 3">Optimum pH is 7.5.</text>
    </phDependence>
    <temperatureDependence>
        <text evidence="2 3">Optimum temperature is 45 degrees Celsius.</text>
    </temperatureDependence>
</comment>
<comment type="similarity">
    <text evidence="1">Belongs to the cellobiose 2-epimerase family.</text>
</comment>
<protein>
    <recommendedName>
        <fullName evidence="1">Cellobiose 2-epimerase</fullName>
        <shortName evidence="1">CE</shortName>
        <ecNumber evidence="1">5.1.3.11</ecNumber>
    </recommendedName>
    <alternativeName>
        <fullName>Mannobiose 2-epimerase</fullName>
        <shortName>MBE</shortName>
    </alternativeName>
</protein>
<feature type="chain" id="PRO_0000421444" description="Cellobiose 2-epimerase">
    <location>
        <begin position="1"/>
        <end position="392"/>
    </location>
</feature>
<organism>
    <name type="scientific">Bacteroides fragilis (strain ATCC 25285 / DSM 2151 / CCUG 4856 / JCM 11019 / LMG 10263 / NCTC 9343 / Onslow / VPI 2553 / EN-2)</name>
    <dbReference type="NCBI Taxonomy" id="272559"/>
    <lineage>
        <taxon>Bacteria</taxon>
        <taxon>Pseudomonadati</taxon>
        <taxon>Bacteroidota</taxon>
        <taxon>Bacteroidia</taxon>
        <taxon>Bacteroidales</taxon>
        <taxon>Bacteroidaceae</taxon>
        <taxon>Bacteroides</taxon>
    </lineage>
</organism>
<gene>
    <name type="primary">bfce</name>
    <name type="ordered locus">BF0774</name>
    <name type="ORF">BF9343_0739</name>
</gene>
<sequence>MDEILKQEMQKELTTRILPYWMERMVDQENGGFYGRITGQEELMPRADKGAILNARILWTYSAAYRLLGREEYKEMANRAKRYLIDHFYDSEFGGVYWSLNYRGEPLDTKKQIYAIGFAIYGLSEFHRATGDPEALMYAVRLFNDIESHSFDGLKNGYCEALTREWNEIADMRLSEKDANERKTMNTHLHILEPYTNLYRVWKDARLERQLYNLIGLFTEKILDKDTSHLQLFFDNDWQSKYPVVSYGHDIEASWLLHEAARVLGDAGLIAEIEPVVKKIAAAASEGLTSDGGMIYEKNLTTGHIDGDYHWWVQAETVVGYYNLFRYFGDRGALQHSIDCWEFIKRHLTDDVHGEWFWSLRADGSLNRDDDKAGFWKCPYHNGRMCIELLGE</sequence>
<dbReference type="EC" id="5.1.3.11" evidence="1"/>
<dbReference type="EMBL" id="AB467284">
    <property type="protein sequence ID" value="BAH23773.1"/>
    <property type="molecule type" value="Genomic_DNA"/>
</dbReference>
<dbReference type="EMBL" id="CR626927">
    <property type="protein sequence ID" value="CAH06520.1"/>
    <property type="molecule type" value="Genomic_DNA"/>
</dbReference>
<dbReference type="RefSeq" id="WP_008658675.1">
    <property type="nucleotide sequence ID" value="NZ_UFTH01000001.1"/>
</dbReference>
<dbReference type="SMR" id="Q5LH66"/>
<dbReference type="PaxDb" id="272559-BF9343_0739"/>
<dbReference type="DNASU" id="3288497"/>
<dbReference type="GeneID" id="60370042"/>
<dbReference type="KEGG" id="bfs:BF9343_0739"/>
<dbReference type="eggNOG" id="COG2942">
    <property type="taxonomic scope" value="Bacteria"/>
</dbReference>
<dbReference type="HOGENOM" id="CLU_046651_3_0_10"/>
<dbReference type="BioCyc" id="BFRA272559:G1GHZ-808-MONOMER"/>
<dbReference type="BioCyc" id="MetaCyc:MONOMER-18524"/>
<dbReference type="BRENDA" id="5.1.3.11">
    <property type="organism ID" value="755"/>
</dbReference>
<dbReference type="Proteomes" id="UP000006731">
    <property type="component" value="Chromosome"/>
</dbReference>
<dbReference type="GO" id="GO:0047736">
    <property type="term" value="F:cellobiose epimerase activity"/>
    <property type="evidence" value="ECO:0007669"/>
    <property type="project" value="UniProtKB-UniRule"/>
</dbReference>
<dbReference type="GO" id="GO:0005975">
    <property type="term" value="P:carbohydrate metabolic process"/>
    <property type="evidence" value="ECO:0007669"/>
    <property type="project" value="InterPro"/>
</dbReference>
<dbReference type="Gene3D" id="1.50.10.10">
    <property type="match status" value="1"/>
</dbReference>
<dbReference type="HAMAP" id="MF_00929">
    <property type="entry name" value="Cellobiose_2_epim"/>
    <property type="match status" value="1"/>
</dbReference>
<dbReference type="InterPro" id="IPR008928">
    <property type="entry name" value="6-hairpin_glycosidase_sf"/>
</dbReference>
<dbReference type="InterPro" id="IPR012341">
    <property type="entry name" value="6hp_glycosidase-like_sf"/>
</dbReference>
<dbReference type="InterPro" id="IPR010819">
    <property type="entry name" value="AGE/CE"/>
</dbReference>
<dbReference type="InterPro" id="IPR028584">
    <property type="entry name" value="Cellobiose_2_epim"/>
</dbReference>
<dbReference type="PANTHER" id="PTHR15108">
    <property type="entry name" value="N-ACYLGLUCOSAMINE-2-EPIMERASE"/>
    <property type="match status" value="1"/>
</dbReference>
<dbReference type="Pfam" id="PF07221">
    <property type="entry name" value="GlcNAc_2-epim"/>
    <property type="match status" value="1"/>
</dbReference>
<dbReference type="SUPFAM" id="SSF48208">
    <property type="entry name" value="Six-hairpin glycosidases"/>
    <property type="match status" value="1"/>
</dbReference>
<reference key="1">
    <citation type="journal article" date="2009" name="Biosci. Biotechnol. Biochem.">
        <title>Identification of the cellobiose 2-epimerase gene in the genome of Bacteroides fragilis NCTC 9343.</title>
        <authorList>
            <person name="Senoura T."/>
            <person name="Taguchi H."/>
            <person name="Ito S."/>
            <person name="Hamada S."/>
            <person name="Matsui H."/>
            <person name="Fukiya S."/>
            <person name="Yokota A."/>
            <person name="Watanabe J."/>
            <person name="Wasaki J."/>
            <person name="Ito S."/>
        </authorList>
    </citation>
    <scope>NUCLEOTIDE SEQUENCE [GENOMIC DNA]</scope>
    <scope>PROTEIN SEQUENCE OF 1-10</scope>
    <scope>FUNCTION</scope>
    <scope>CATALYTIC ACTIVITY</scope>
    <scope>BIOPHYSICOCHEMICAL PROPERTIES</scope>
    <source>
        <strain>ATCC 25285 / DSM 2151 / CCUG 4856 / JCM 11019 / LMG 10263 / NCTC 9343 / Onslow / VPI 2553 / EN-2</strain>
    </source>
</reference>
<reference key="2">
    <citation type="journal article" date="2005" name="Science">
        <title>Extensive DNA inversions in the B. fragilis genome control variable gene expression.</title>
        <authorList>
            <person name="Cerdeno-Tarraga A.-M."/>
            <person name="Patrick S."/>
            <person name="Crossman L.C."/>
            <person name="Blakely G."/>
            <person name="Abratt V."/>
            <person name="Lennard N."/>
            <person name="Poxton I."/>
            <person name="Duerden B."/>
            <person name="Harris B."/>
            <person name="Quail M.A."/>
            <person name="Barron A."/>
            <person name="Clark L."/>
            <person name="Corton C."/>
            <person name="Doggett J."/>
            <person name="Holden M.T.G."/>
            <person name="Larke N."/>
            <person name="Line A."/>
            <person name="Lord A."/>
            <person name="Norbertczak H."/>
            <person name="Ormond D."/>
            <person name="Price C."/>
            <person name="Rabbinowitsch E."/>
            <person name="Woodward J."/>
            <person name="Barrell B.G."/>
            <person name="Parkhill J."/>
        </authorList>
    </citation>
    <scope>NUCLEOTIDE SEQUENCE [LARGE SCALE GENOMIC DNA]</scope>
    <source>
        <strain>ATCC 25285 / DSM 2151 / CCUG 4856 / JCM 11019 / LMG 10263 / NCTC 9343 / Onslow / VPI 2553 / EN-2</strain>
    </source>
</reference>
<reference key="3">
    <citation type="journal article" date="2011" name="Biochem. Biophys. Res. Commun.">
        <title>New microbial mannan catabolic pathway that involves a novel mannosylglucose phosphorylase.</title>
        <authorList>
            <person name="Senoura T."/>
            <person name="Ito S."/>
            <person name="Taguchi H."/>
            <person name="Higa M."/>
            <person name="Hamada S."/>
            <person name="Matsui H."/>
            <person name="Ozawa T."/>
            <person name="Jin S."/>
            <person name="Watanabe J."/>
            <person name="Wasaki J."/>
            <person name="Ito S."/>
        </authorList>
    </citation>
    <scope>FUNCTION AS A MANNOBIOSE 2-EPIMERASE</scope>
    <scope>CATALYTIC ACTIVITY</scope>
    <scope>BIOPHYSICOCHEMICAL PROPERTIES</scope>
    <source>
        <strain>ATCC 25285 / DSM 2151 / CCUG 4856 / JCM 11019 / LMG 10263 / NCTC 9343 / Onslow / VPI 2553 / EN-2</strain>
    </source>
</reference>
<name>CEEP_BACFN</name>
<proteinExistence type="evidence at protein level"/>
<keyword id="KW-0903">Direct protein sequencing</keyword>
<keyword id="KW-0413">Isomerase</keyword>